<evidence type="ECO:0000250" key="1">
    <source>
        <dbReference type="UniProtKB" id="P69783"/>
    </source>
</evidence>
<evidence type="ECO:0000255" key="2">
    <source>
        <dbReference type="PROSITE-ProRule" id="PRU00416"/>
    </source>
</evidence>
<evidence type="ECO:0000269" key="3">
    <source>
    </source>
</evidence>
<evidence type="ECO:0000269" key="4">
    <source>
    </source>
</evidence>
<evidence type="ECO:0000269" key="5">
    <source>
    </source>
</evidence>
<evidence type="ECO:0000303" key="6">
    <source>
    </source>
</evidence>
<evidence type="ECO:0000303" key="7">
    <source>
    </source>
</evidence>
<evidence type="ECO:0000305" key="8"/>
<evidence type="ECO:0000305" key="9">
    <source>
    </source>
</evidence>
<dbReference type="EMBL" id="X05210">
    <property type="protein sequence ID" value="CAA28837.1"/>
    <property type="molecule type" value="Genomic_DNA"/>
</dbReference>
<dbReference type="EMBL" id="AE006468">
    <property type="protein sequence ID" value="AAL21327.1"/>
    <property type="molecule type" value="Genomic_DNA"/>
</dbReference>
<dbReference type="PIR" id="A03405">
    <property type="entry name" value="WQEB3T"/>
</dbReference>
<dbReference type="RefSeq" id="NP_461368.1">
    <property type="nucleotide sequence ID" value="NC_003197.2"/>
</dbReference>
<dbReference type="RefSeq" id="WP_000522253.1">
    <property type="nucleotide sequence ID" value="NC_003197.2"/>
</dbReference>
<dbReference type="BMRB" id="P0A283"/>
<dbReference type="SMR" id="P0A283"/>
<dbReference type="IntAct" id="P0A283">
    <property type="interactions" value="1"/>
</dbReference>
<dbReference type="STRING" id="99287.STM2433"/>
<dbReference type="PaxDb" id="99287-STM2433"/>
<dbReference type="GeneID" id="1253955"/>
<dbReference type="GeneID" id="97394192"/>
<dbReference type="KEGG" id="stm:STM2433"/>
<dbReference type="PATRIC" id="fig|99287.12.peg.2571"/>
<dbReference type="HOGENOM" id="CLU_012312_5_1_6"/>
<dbReference type="OMA" id="KMVAPCD"/>
<dbReference type="PhylomeDB" id="P0A283"/>
<dbReference type="BioCyc" id="SENT99287:STM2433-MONOMER"/>
<dbReference type="PRO" id="PR:P0A283"/>
<dbReference type="Proteomes" id="UP000001014">
    <property type="component" value="Chromosome"/>
</dbReference>
<dbReference type="GO" id="GO:0005737">
    <property type="term" value="C:cytoplasm"/>
    <property type="evidence" value="ECO:0007669"/>
    <property type="project" value="UniProtKB-SubCell"/>
</dbReference>
<dbReference type="GO" id="GO:0016301">
    <property type="term" value="F:kinase activity"/>
    <property type="evidence" value="ECO:0000318"/>
    <property type="project" value="GO_Central"/>
</dbReference>
<dbReference type="GO" id="GO:0046872">
    <property type="term" value="F:metal ion binding"/>
    <property type="evidence" value="ECO:0007669"/>
    <property type="project" value="UniProtKB-KW"/>
</dbReference>
<dbReference type="GO" id="GO:0009401">
    <property type="term" value="P:phosphoenolpyruvate-dependent sugar phosphotransferase system"/>
    <property type="evidence" value="ECO:0000318"/>
    <property type="project" value="GO_Central"/>
</dbReference>
<dbReference type="CDD" id="cd00210">
    <property type="entry name" value="PTS_IIA_glc"/>
    <property type="match status" value="1"/>
</dbReference>
<dbReference type="FunFam" id="2.70.70.10:FF:000001">
    <property type="entry name" value="PTS system glucose-specific IIA component"/>
    <property type="match status" value="1"/>
</dbReference>
<dbReference type="Gene3D" id="2.70.70.10">
    <property type="entry name" value="Glucose Permease (Domain IIA)"/>
    <property type="match status" value="1"/>
</dbReference>
<dbReference type="InterPro" id="IPR011055">
    <property type="entry name" value="Dup_hybrid_motif"/>
</dbReference>
<dbReference type="InterPro" id="IPR001127">
    <property type="entry name" value="PTS_EIIA_1_perm"/>
</dbReference>
<dbReference type="InterPro" id="IPR050890">
    <property type="entry name" value="PTS_EIIA_component"/>
</dbReference>
<dbReference type="NCBIfam" id="NF006962">
    <property type="entry name" value="PRK09439.1"/>
    <property type="match status" value="1"/>
</dbReference>
<dbReference type="NCBIfam" id="TIGR00830">
    <property type="entry name" value="PTBA"/>
    <property type="match status" value="1"/>
</dbReference>
<dbReference type="PANTHER" id="PTHR45008">
    <property type="entry name" value="PTS SYSTEM GLUCOSE-SPECIFIC EIIA COMPONENT"/>
    <property type="match status" value="1"/>
</dbReference>
<dbReference type="PANTHER" id="PTHR45008:SF1">
    <property type="entry name" value="PTS SYSTEM GLUCOSE-SPECIFIC EIIA COMPONENT"/>
    <property type="match status" value="1"/>
</dbReference>
<dbReference type="Pfam" id="PF00358">
    <property type="entry name" value="PTS_EIIA_1"/>
    <property type="match status" value="1"/>
</dbReference>
<dbReference type="SUPFAM" id="SSF51261">
    <property type="entry name" value="Duplicated hybrid motif"/>
    <property type="match status" value="1"/>
</dbReference>
<dbReference type="PROSITE" id="PS51093">
    <property type="entry name" value="PTS_EIIA_TYPE_1"/>
    <property type="match status" value="1"/>
</dbReference>
<dbReference type="PROSITE" id="PS00371">
    <property type="entry name" value="PTS_EIIA_TYPE_1_HIS"/>
    <property type="match status" value="1"/>
</dbReference>
<feature type="initiator methionine" description="Removed" evidence="1">
    <location>
        <position position="1"/>
    </location>
</feature>
<feature type="chain" id="PRO_0000186535" description="PTS system glucose-specific EIIA component">
    <location>
        <begin position="2"/>
        <end position="169"/>
    </location>
</feature>
<feature type="domain" description="PTS EIIA type-1" evidence="2">
    <location>
        <begin position="39"/>
        <end position="143"/>
    </location>
</feature>
<feature type="active site" description="Tele-phosphohistidine intermediate; for EIIA activity" evidence="1 2">
    <location>
        <position position="91"/>
    </location>
</feature>
<feature type="binding site" evidence="1">
    <location>
        <position position="76"/>
    </location>
    <ligand>
        <name>Zn(2+)</name>
        <dbReference type="ChEBI" id="CHEBI:29105"/>
        <note>ligand shared with glycerol kinase</note>
    </ligand>
</feature>
<feature type="binding site" evidence="1">
    <location>
        <position position="91"/>
    </location>
    <ligand>
        <name>Zn(2+)</name>
        <dbReference type="ChEBI" id="CHEBI:29105"/>
        <note>ligand shared with glycerol kinase</note>
    </ligand>
</feature>
<feature type="site" description="Important for phospho-donor activity" evidence="1">
    <location>
        <position position="76"/>
    </location>
</feature>
<feature type="modified residue" description="Phosphohistidine; by HPr" evidence="1">
    <location>
        <position position="91"/>
    </location>
</feature>
<sequence length="169" mass="18247">MGLFDKLKSLVSDDKKDTGTIEIVAPLSGEIVNIEDVPDVVFAEKIVGDGIAIKPTGNKMVAPVDGTIGKIFETNHAFSIESDSGIELFVHFGIDTVELKGEGFKRIAEEGQRVKVGDPVIEFDLPLLEEKAKSTLTPVVISNMDEIKELIKLSGSVTVGETPVIRIKK</sequence>
<gene>
    <name type="primary">crr</name>
    <name type="ordered locus">STM2433</name>
</gene>
<reference key="1">
    <citation type="journal article" date="1984" name="EMBO J.">
        <title>Molecular cloning, sequencing, and expression of the crr gene: the structural gene for IIIGlc of the bacterial PEP:glucose phosphotransferase system.</title>
        <authorList>
            <person name="Nelson S.O."/>
            <person name="Schuitema A.R.J."/>
            <person name="Benne R."/>
            <person name="van der Ploeg L.H.T."/>
            <person name="Plijter J.S."/>
            <person name="Aan F."/>
            <person name="Postma P.W."/>
        </authorList>
    </citation>
    <scope>NUCLEOTIDE SEQUENCE [GENOMIC DNA]</scope>
</reference>
<reference key="2">
    <citation type="journal article" date="2001" name="Nature">
        <title>Complete genome sequence of Salmonella enterica serovar Typhimurium LT2.</title>
        <authorList>
            <person name="McClelland M."/>
            <person name="Sanderson K.E."/>
            <person name="Spieth J."/>
            <person name="Clifton S.W."/>
            <person name="Latreille P."/>
            <person name="Courtney L."/>
            <person name="Porwollik S."/>
            <person name="Ali J."/>
            <person name="Dante M."/>
            <person name="Du F."/>
            <person name="Hou S."/>
            <person name="Layman D."/>
            <person name="Leonard S."/>
            <person name="Nguyen C."/>
            <person name="Scott K."/>
            <person name="Holmes A."/>
            <person name="Grewal N."/>
            <person name="Mulvaney E."/>
            <person name="Ryan E."/>
            <person name="Sun H."/>
            <person name="Florea L."/>
            <person name="Miller W."/>
            <person name="Stoneking T."/>
            <person name="Nhan M."/>
            <person name="Waterston R."/>
            <person name="Wilson R.K."/>
        </authorList>
    </citation>
    <scope>NUCLEOTIDE SEQUENCE [LARGE SCALE GENOMIC DNA]</scope>
    <source>
        <strain>LT2 / SGSC1412 / ATCC 700720</strain>
    </source>
</reference>
<reference key="3">
    <citation type="journal article" date="1976" name="J. Biol. Chem.">
        <title>Sugar transport. The crr mutation: its effect on repression of enzyme synthesis.</title>
        <authorList>
            <person name="Saier M.H. Jr."/>
            <person name="Roseman S."/>
        </authorList>
    </citation>
    <scope>FUNCTION</scope>
    <scope>DISRUPTION PHENOTYPE</scope>
</reference>
<reference key="4">
    <citation type="journal article" date="1982" name="J. Biol. Chem.">
        <title>Sugar transport by the bacterial phosphotransferase system. Isolation and characterization of a glucose-specific phosphocarrier protein (IIIGlc) from Salmonella typhimurium.</title>
        <authorList>
            <person name="Meadow N.D."/>
            <person name="Roseman S."/>
        </authorList>
    </citation>
    <scope>FUNCTION</scope>
    <scope>CATALYTIC ACTIVITY</scope>
    <scope>BIOPHYSICOCHEMICAL PROPERTIES</scope>
</reference>
<reference key="5">
    <citation type="journal article" date="1982" name="J. Biol. Chem.">
        <title>Sugar transport by the bacterial phosphotransferase system. The glucose receptors of the Salmonella typhimurium phosphotransferase system.</title>
        <authorList>
            <person name="Stock J.B."/>
            <person name="Waygood E.B."/>
            <person name="Meadow N.D."/>
            <person name="Postma P.W."/>
            <person name="Roseman S."/>
        </authorList>
    </citation>
    <scope>FUNCTION</scope>
    <scope>CATALYTIC ACTIVITY</scope>
    <scope>BIOPHYSICOCHEMICAL PROPERTIES</scope>
    <scope>SUBSTRATE SPECIFICITY</scope>
</reference>
<reference key="6">
    <citation type="journal article" date="2006" name="Microbiol. Mol. Biol. Rev.">
        <title>How phosphotransferase system-related protein phosphorylation regulates carbohydrate metabolism in bacteria.</title>
        <authorList>
            <person name="Deutscher J."/>
            <person name="Francke C."/>
            <person name="Postma P.W."/>
        </authorList>
    </citation>
    <scope>FUNCTION</scope>
</reference>
<organism>
    <name type="scientific">Salmonella typhimurium (strain LT2 / SGSC1412 / ATCC 700720)</name>
    <dbReference type="NCBI Taxonomy" id="99287"/>
    <lineage>
        <taxon>Bacteria</taxon>
        <taxon>Pseudomonadati</taxon>
        <taxon>Pseudomonadota</taxon>
        <taxon>Gammaproteobacteria</taxon>
        <taxon>Enterobacterales</taxon>
        <taxon>Enterobacteriaceae</taxon>
        <taxon>Salmonella</taxon>
    </lineage>
</organism>
<proteinExistence type="evidence at protein level"/>
<protein>
    <recommendedName>
        <fullName evidence="6">PTS system glucose-specific EIIA component</fullName>
    </recommendedName>
    <alternativeName>
        <fullName evidence="6">EIIA-Glc</fullName>
    </alternativeName>
    <alternativeName>
        <fullName evidence="6">EIII-Glc</fullName>
    </alternativeName>
    <alternativeName>
        <fullName evidence="7">Glucose-specific phosphotransferase enzyme IIA component</fullName>
    </alternativeName>
</protein>
<name>PTGA_SALTY</name>
<keyword id="KW-0963">Cytoplasm</keyword>
<keyword id="KW-0418">Kinase</keyword>
<keyword id="KW-0479">Metal-binding</keyword>
<keyword id="KW-0597">Phosphoprotein</keyword>
<keyword id="KW-0598">Phosphotransferase system</keyword>
<keyword id="KW-1185">Reference proteome</keyword>
<keyword id="KW-0762">Sugar transport</keyword>
<keyword id="KW-0808">Transferase</keyword>
<keyword id="KW-0813">Transport</keyword>
<keyword id="KW-0862">Zinc</keyword>
<comment type="function">
    <text evidence="3 4 5 9">The phosphoenolpyruvate-dependent sugar phosphotransferase system (sugar PTS), a major carbohydrate active transport system, catalyzes the phosphorylation of incoming sugar substrates concomitantly with their translocation across the cell membrane. The enzyme II complex composed of PtsG and Crr is involved in glucose transport (PubMed:6292227, PubMed:6754734). It can also phosphorylate mannose, methyl alpha-glucoside and 2-deoxy-glucose (PubMed:6292227). The non-phosphorylated EIII-Glc is an inhibitor for uptake of certain sugars such as maltose, melibiose, lactose, and glycerol. Phosphorylated EIII-Glc, however, may be an activator for adenylate cyclase (PubMed:789369).</text>
</comment>
<comment type="cofactor">
    <cofactor evidence="1">
        <name>Zn(2+)</name>
        <dbReference type="ChEBI" id="CHEBI:29105"/>
    </cofactor>
    <text evidence="1">Binds 1 zinc ion per glycerol kinase EIIA-Glc dimer. The zinc ion is important for dimerization.</text>
</comment>
<comment type="biophysicochemical properties">
    <kinetics>
        <KM evidence="4">3.4 uM for methyl alpha-glucoside (with phospho-IIIGlc Slow)</KM>
        <KM evidence="3">6 uM for methyl alpha-glucoside</KM>
        <KM evidence="3">10 uM for glucose</KM>
        <KM evidence="3">40 uM for mannose</KM>
        <KM evidence="3">200 uM for 2-deoxy-glucose</KM>
        <Vmax evidence="3">126.0 umol/min/mg enzyme with methyl alpha-glucoside as substrate</Vmax>
        <Vmax evidence="3">126.0 umol/min/mg enzyme with glucose as substrate</Vmax>
        <Vmax evidence="3">10.0 umol/min/mg enzyme with mannose as substrate</Vmax>
        <Vmax evidence="3">10.0 umol/min/mg enzyme with 2-deoxy-glucose as substrate</Vmax>
    </kinetics>
</comment>
<comment type="subunit">
    <text evidence="1">Heterodimer with glycerol kinase (glpk).</text>
</comment>
<comment type="subcellular location">
    <subcellularLocation>
        <location evidence="8">Cytoplasm</location>
    </subcellularLocation>
</comment>
<comment type="domain">
    <text evidence="2">The EIIA domain is phosphorylated by phospho-HPr on a histidyl residue. Then, it transfers the phosphoryl group to the EIIB domain.</text>
</comment>
<comment type="disruption phenotype">
    <text evidence="5">In mutants defective in enzyme I and histidine-containing phosphate carrier protein (HPr), cells lacking this gene are able to grow on the non-PTS compounds such as glycerol, maltose, melibiose, mannose 6-phosphate, and alpha-glycerol phosphate.</text>
</comment>
<comment type="miscellaneous">
    <text evidence="4">Two forms of III-Glc (called IIIGlc Slow and IIIGlc Fast) are present in living cells. IIIGlc Fast, derived from IIIGlc Slow by cleavage of the seven NH2-terminal amino acids, is present only in trace quantities and has slight activity (only 2-3% of phospho-IIIGlc Slow) in the phosphorylation of sugar. Both forms accept phosphate from phosphoenolpyruvate via Enzyme I and HPr, however only IIIGlc Slow participates in the phosphorylation of glucose or methyl alpha-D-glucoside. IIIGlc Fast may play a role in the regulation of non-PTS sugar transport systems.</text>
</comment>
<accession>P0A283</accession>
<accession>P02908</accession>